<organism>
    <name type="scientific">Mus musculus</name>
    <name type="common">Mouse</name>
    <dbReference type="NCBI Taxonomy" id="10090"/>
    <lineage>
        <taxon>Eukaryota</taxon>
        <taxon>Metazoa</taxon>
        <taxon>Chordata</taxon>
        <taxon>Craniata</taxon>
        <taxon>Vertebrata</taxon>
        <taxon>Euteleostomi</taxon>
        <taxon>Mammalia</taxon>
        <taxon>Eutheria</taxon>
        <taxon>Euarchontoglires</taxon>
        <taxon>Glires</taxon>
        <taxon>Rodentia</taxon>
        <taxon>Myomorpha</taxon>
        <taxon>Muroidea</taxon>
        <taxon>Muridae</taxon>
        <taxon>Murinae</taxon>
        <taxon>Mus</taxon>
        <taxon>Mus</taxon>
    </lineage>
</organism>
<gene>
    <name type="primary">Tmed5</name>
</gene>
<proteinExistence type="evidence at protein level"/>
<comment type="function">
    <text evidence="1">Potential role in vesicular protein trafficking, mainly in the early secretory pathway. Required for the maintenance of the Golgi apparatus; involved in protein exchange between Golgi stacks during assembly. Probably not required for COPI-vesicle-mediated retrograde transport (By similarity).</text>
</comment>
<comment type="subunit">
    <text evidence="1">Interacts with TMED9 and TMED10.</text>
</comment>
<comment type="subcellular location">
    <subcellularLocation>
        <location evidence="1">Endoplasmic reticulum membrane</location>
        <topology evidence="1">Single-pass type I membrane protein</topology>
    </subcellularLocation>
    <subcellularLocation>
        <location evidence="1">Golgi apparatus</location>
        <location evidence="1">cis-Golgi network membrane</location>
        <topology evidence="1">Single-pass type I membrane protein</topology>
    </subcellularLocation>
    <subcellularLocation>
        <location evidence="1">Endoplasmic reticulum-Golgi intermediate compartment membrane</location>
        <topology evidence="1">Single-pass type I membrane protein</topology>
    </subcellularLocation>
    <text evidence="1">Probably cycles between compartments of the early secretatory pathway.</text>
</comment>
<comment type="similarity">
    <text evidence="4">Belongs to the EMP24/GP25L family.</text>
</comment>
<protein>
    <recommendedName>
        <fullName>Transmembrane emp24 domain-containing protein 5</fullName>
    </recommendedName>
    <alternativeName>
        <fullName>p24 family protein gamma-2</fullName>
        <shortName>p24gamma2</shortName>
    </alternativeName>
</protein>
<dbReference type="EMBL" id="AK014490">
    <property type="protein sequence ID" value="BAB29390.1"/>
    <property type="molecule type" value="mRNA"/>
</dbReference>
<dbReference type="EMBL" id="AK033463">
    <property type="protein sequence ID" value="BAC28301.1"/>
    <property type="molecule type" value="mRNA"/>
</dbReference>
<dbReference type="EMBL" id="AK170036">
    <property type="protein sequence ID" value="BAE41524.1"/>
    <property type="molecule type" value="mRNA"/>
</dbReference>
<dbReference type="CCDS" id="CCDS19508.1"/>
<dbReference type="RefSeq" id="NP_083152.1">
    <property type="nucleotide sequence ID" value="NM_028876.3"/>
</dbReference>
<dbReference type="PDB" id="5GU5">
    <property type="method" value="X-ray"/>
    <property type="resolution" value="2.80 A"/>
    <property type="chains" value="A=33-144"/>
</dbReference>
<dbReference type="PDBsum" id="5GU5"/>
<dbReference type="SMR" id="Q9CXE7"/>
<dbReference type="BioGRID" id="215788">
    <property type="interactions" value="3"/>
</dbReference>
<dbReference type="FunCoup" id="Q9CXE7">
    <property type="interactions" value="3577"/>
</dbReference>
<dbReference type="STRING" id="10090.ENSMUSP00000002837"/>
<dbReference type="PhosphoSitePlus" id="Q9CXE7"/>
<dbReference type="jPOST" id="Q9CXE7"/>
<dbReference type="PaxDb" id="10090-ENSMUSP00000002837"/>
<dbReference type="PeptideAtlas" id="Q9CXE7"/>
<dbReference type="ProteomicsDB" id="259426"/>
<dbReference type="Pumba" id="Q9CXE7"/>
<dbReference type="TopDownProteomics" id="Q9CXE7"/>
<dbReference type="Antibodypedia" id="33655">
    <property type="antibodies" value="41 antibodies from 17 providers"/>
</dbReference>
<dbReference type="DNASU" id="73130"/>
<dbReference type="Ensembl" id="ENSMUST00000002837.11">
    <property type="protein sequence ID" value="ENSMUSP00000002837.5"/>
    <property type="gene ID" value="ENSMUSG00000063406.12"/>
</dbReference>
<dbReference type="GeneID" id="73130"/>
<dbReference type="KEGG" id="mmu:73130"/>
<dbReference type="UCSC" id="uc008ynp.1">
    <property type="organism name" value="mouse"/>
</dbReference>
<dbReference type="AGR" id="MGI:1921586"/>
<dbReference type="CTD" id="50999"/>
<dbReference type="MGI" id="MGI:1921586">
    <property type="gene designation" value="Tmed5"/>
</dbReference>
<dbReference type="VEuPathDB" id="HostDB:ENSMUSG00000063406"/>
<dbReference type="eggNOG" id="KOG3287">
    <property type="taxonomic scope" value="Eukaryota"/>
</dbReference>
<dbReference type="GeneTree" id="ENSGT00940000155468"/>
<dbReference type="HOGENOM" id="CLU_066963_0_0_1"/>
<dbReference type="InParanoid" id="Q9CXE7"/>
<dbReference type="OMA" id="GQDQEDW"/>
<dbReference type="OrthoDB" id="5976732at2759"/>
<dbReference type="PhylomeDB" id="Q9CXE7"/>
<dbReference type="TreeFam" id="TF313000"/>
<dbReference type="Reactome" id="R-MMU-3238698">
    <property type="pathway name" value="WNT ligand biogenesis and trafficking"/>
</dbReference>
<dbReference type="BioGRID-ORCS" id="73130">
    <property type="hits" value="1 hit in 75 CRISPR screens"/>
</dbReference>
<dbReference type="PRO" id="PR:Q9CXE7"/>
<dbReference type="Proteomes" id="UP000000589">
    <property type="component" value="Chromosome 5"/>
</dbReference>
<dbReference type="RNAct" id="Q9CXE7">
    <property type="molecule type" value="protein"/>
</dbReference>
<dbReference type="Bgee" id="ENSMUSG00000063406">
    <property type="expression patterns" value="Expressed in dorsal pancreas and 248 other cell types or tissues"/>
</dbReference>
<dbReference type="ExpressionAtlas" id="Q9CXE7">
    <property type="expression patterns" value="baseline and differential"/>
</dbReference>
<dbReference type="GO" id="GO:0005801">
    <property type="term" value="C:cis-Golgi network"/>
    <property type="evidence" value="ECO:0000250"/>
    <property type="project" value="UniProtKB"/>
</dbReference>
<dbReference type="GO" id="GO:0070971">
    <property type="term" value="C:endoplasmic reticulum exit site"/>
    <property type="evidence" value="ECO:0000250"/>
    <property type="project" value="UniProtKB"/>
</dbReference>
<dbReference type="GO" id="GO:0005789">
    <property type="term" value="C:endoplasmic reticulum membrane"/>
    <property type="evidence" value="ECO:0007669"/>
    <property type="project" value="UniProtKB-SubCell"/>
</dbReference>
<dbReference type="GO" id="GO:0005793">
    <property type="term" value="C:endoplasmic reticulum-Golgi intermediate compartment"/>
    <property type="evidence" value="ECO:0000250"/>
    <property type="project" value="UniProtKB"/>
</dbReference>
<dbReference type="GO" id="GO:0033116">
    <property type="term" value="C:endoplasmic reticulum-Golgi intermediate compartment membrane"/>
    <property type="evidence" value="ECO:0007669"/>
    <property type="project" value="UniProtKB-SubCell"/>
</dbReference>
<dbReference type="GO" id="GO:0090161">
    <property type="term" value="P:Golgi ribbon formation"/>
    <property type="evidence" value="ECO:0000250"/>
    <property type="project" value="UniProtKB"/>
</dbReference>
<dbReference type="GO" id="GO:0015031">
    <property type="term" value="P:protein transport"/>
    <property type="evidence" value="ECO:0007669"/>
    <property type="project" value="UniProtKB-KW"/>
</dbReference>
<dbReference type="InterPro" id="IPR015720">
    <property type="entry name" value="Emp24-like"/>
</dbReference>
<dbReference type="InterPro" id="IPR009038">
    <property type="entry name" value="GOLD_dom"/>
</dbReference>
<dbReference type="InterPro" id="IPR036598">
    <property type="entry name" value="GOLD_dom_sf"/>
</dbReference>
<dbReference type="PANTHER" id="PTHR22811">
    <property type="entry name" value="TRANSMEMBRANE EMP24 DOMAIN-CONTAINING PROTEIN"/>
    <property type="match status" value="1"/>
</dbReference>
<dbReference type="Pfam" id="PF01105">
    <property type="entry name" value="EMP24_GP25L"/>
    <property type="match status" value="1"/>
</dbReference>
<dbReference type="SMART" id="SM01190">
    <property type="entry name" value="EMP24_GP25L"/>
    <property type="match status" value="1"/>
</dbReference>
<dbReference type="SUPFAM" id="SSF101576">
    <property type="entry name" value="Supernatant protein factor (SPF), C-terminal domain"/>
    <property type="match status" value="1"/>
</dbReference>
<dbReference type="PROSITE" id="PS50866">
    <property type="entry name" value="GOLD"/>
    <property type="match status" value="1"/>
</dbReference>
<accession>Q9CXE7</accession>
<accession>Q3TDS6</accession>
<evidence type="ECO:0000250" key="1"/>
<evidence type="ECO:0000255" key="2"/>
<evidence type="ECO:0000255" key="3">
    <source>
        <dbReference type="PROSITE-ProRule" id="PRU00096"/>
    </source>
</evidence>
<evidence type="ECO:0000305" key="4"/>
<evidence type="ECO:0007829" key="5">
    <source>
        <dbReference type="PDB" id="5GU5"/>
    </source>
</evidence>
<reference key="1">
    <citation type="journal article" date="2005" name="Science">
        <title>The transcriptional landscape of the mammalian genome.</title>
        <authorList>
            <person name="Carninci P."/>
            <person name="Kasukawa T."/>
            <person name="Katayama S."/>
            <person name="Gough J."/>
            <person name="Frith M.C."/>
            <person name="Maeda N."/>
            <person name="Oyama R."/>
            <person name="Ravasi T."/>
            <person name="Lenhard B."/>
            <person name="Wells C."/>
            <person name="Kodzius R."/>
            <person name="Shimokawa K."/>
            <person name="Bajic V.B."/>
            <person name="Brenner S.E."/>
            <person name="Batalov S."/>
            <person name="Forrest A.R."/>
            <person name="Zavolan M."/>
            <person name="Davis M.J."/>
            <person name="Wilming L.G."/>
            <person name="Aidinis V."/>
            <person name="Allen J.E."/>
            <person name="Ambesi-Impiombato A."/>
            <person name="Apweiler R."/>
            <person name="Aturaliya R.N."/>
            <person name="Bailey T.L."/>
            <person name="Bansal M."/>
            <person name="Baxter L."/>
            <person name="Beisel K.W."/>
            <person name="Bersano T."/>
            <person name="Bono H."/>
            <person name="Chalk A.M."/>
            <person name="Chiu K.P."/>
            <person name="Choudhary V."/>
            <person name="Christoffels A."/>
            <person name="Clutterbuck D.R."/>
            <person name="Crowe M.L."/>
            <person name="Dalla E."/>
            <person name="Dalrymple B.P."/>
            <person name="de Bono B."/>
            <person name="Della Gatta G."/>
            <person name="di Bernardo D."/>
            <person name="Down T."/>
            <person name="Engstrom P."/>
            <person name="Fagiolini M."/>
            <person name="Faulkner G."/>
            <person name="Fletcher C.F."/>
            <person name="Fukushima T."/>
            <person name="Furuno M."/>
            <person name="Futaki S."/>
            <person name="Gariboldi M."/>
            <person name="Georgii-Hemming P."/>
            <person name="Gingeras T.R."/>
            <person name="Gojobori T."/>
            <person name="Green R.E."/>
            <person name="Gustincich S."/>
            <person name="Harbers M."/>
            <person name="Hayashi Y."/>
            <person name="Hensch T.K."/>
            <person name="Hirokawa N."/>
            <person name="Hill D."/>
            <person name="Huminiecki L."/>
            <person name="Iacono M."/>
            <person name="Ikeo K."/>
            <person name="Iwama A."/>
            <person name="Ishikawa T."/>
            <person name="Jakt M."/>
            <person name="Kanapin A."/>
            <person name="Katoh M."/>
            <person name="Kawasawa Y."/>
            <person name="Kelso J."/>
            <person name="Kitamura H."/>
            <person name="Kitano H."/>
            <person name="Kollias G."/>
            <person name="Krishnan S.P."/>
            <person name="Kruger A."/>
            <person name="Kummerfeld S.K."/>
            <person name="Kurochkin I.V."/>
            <person name="Lareau L.F."/>
            <person name="Lazarevic D."/>
            <person name="Lipovich L."/>
            <person name="Liu J."/>
            <person name="Liuni S."/>
            <person name="McWilliam S."/>
            <person name="Madan Babu M."/>
            <person name="Madera M."/>
            <person name="Marchionni L."/>
            <person name="Matsuda H."/>
            <person name="Matsuzawa S."/>
            <person name="Miki H."/>
            <person name="Mignone F."/>
            <person name="Miyake S."/>
            <person name="Morris K."/>
            <person name="Mottagui-Tabar S."/>
            <person name="Mulder N."/>
            <person name="Nakano N."/>
            <person name="Nakauchi H."/>
            <person name="Ng P."/>
            <person name="Nilsson R."/>
            <person name="Nishiguchi S."/>
            <person name="Nishikawa S."/>
            <person name="Nori F."/>
            <person name="Ohara O."/>
            <person name="Okazaki Y."/>
            <person name="Orlando V."/>
            <person name="Pang K.C."/>
            <person name="Pavan W.J."/>
            <person name="Pavesi G."/>
            <person name="Pesole G."/>
            <person name="Petrovsky N."/>
            <person name="Piazza S."/>
            <person name="Reed J."/>
            <person name="Reid J.F."/>
            <person name="Ring B.Z."/>
            <person name="Ringwald M."/>
            <person name="Rost B."/>
            <person name="Ruan Y."/>
            <person name="Salzberg S.L."/>
            <person name="Sandelin A."/>
            <person name="Schneider C."/>
            <person name="Schoenbach C."/>
            <person name="Sekiguchi K."/>
            <person name="Semple C.A."/>
            <person name="Seno S."/>
            <person name="Sessa L."/>
            <person name="Sheng Y."/>
            <person name="Shibata Y."/>
            <person name="Shimada H."/>
            <person name="Shimada K."/>
            <person name="Silva D."/>
            <person name="Sinclair B."/>
            <person name="Sperling S."/>
            <person name="Stupka E."/>
            <person name="Sugiura K."/>
            <person name="Sultana R."/>
            <person name="Takenaka Y."/>
            <person name="Taki K."/>
            <person name="Tammoja K."/>
            <person name="Tan S.L."/>
            <person name="Tang S."/>
            <person name="Taylor M.S."/>
            <person name="Tegner J."/>
            <person name="Teichmann S.A."/>
            <person name="Ueda H.R."/>
            <person name="van Nimwegen E."/>
            <person name="Verardo R."/>
            <person name="Wei C.L."/>
            <person name="Yagi K."/>
            <person name="Yamanishi H."/>
            <person name="Zabarovsky E."/>
            <person name="Zhu S."/>
            <person name="Zimmer A."/>
            <person name="Hide W."/>
            <person name="Bult C."/>
            <person name="Grimmond S.M."/>
            <person name="Teasdale R.D."/>
            <person name="Liu E.T."/>
            <person name="Brusic V."/>
            <person name="Quackenbush J."/>
            <person name="Wahlestedt C."/>
            <person name="Mattick J.S."/>
            <person name="Hume D.A."/>
            <person name="Kai C."/>
            <person name="Sasaki D."/>
            <person name="Tomaru Y."/>
            <person name="Fukuda S."/>
            <person name="Kanamori-Katayama M."/>
            <person name="Suzuki M."/>
            <person name="Aoki J."/>
            <person name="Arakawa T."/>
            <person name="Iida J."/>
            <person name="Imamura K."/>
            <person name="Itoh M."/>
            <person name="Kato T."/>
            <person name="Kawaji H."/>
            <person name="Kawagashira N."/>
            <person name="Kawashima T."/>
            <person name="Kojima M."/>
            <person name="Kondo S."/>
            <person name="Konno H."/>
            <person name="Nakano K."/>
            <person name="Ninomiya N."/>
            <person name="Nishio T."/>
            <person name="Okada M."/>
            <person name="Plessy C."/>
            <person name="Shibata K."/>
            <person name="Shiraki T."/>
            <person name="Suzuki S."/>
            <person name="Tagami M."/>
            <person name="Waki K."/>
            <person name="Watahiki A."/>
            <person name="Okamura-Oho Y."/>
            <person name="Suzuki H."/>
            <person name="Kawai J."/>
            <person name="Hayashizaki Y."/>
        </authorList>
    </citation>
    <scope>NUCLEOTIDE SEQUENCE [LARGE SCALE MRNA]</scope>
    <source>
        <strain>C57BL/6J</strain>
        <strain>NOD</strain>
        <tissue>Colon</tissue>
        <tissue>Liver</tissue>
    </source>
</reference>
<reference key="2">
    <citation type="journal article" date="2010" name="Cell">
        <title>A tissue-specific atlas of mouse protein phosphorylation and expression.</title>
        <authorList>
            <person name="Huttlin E.L."/>
            <person name="Jedrychowski M.P."/>
            <person name="Elias J.E."/>
            <person name="Goswami T."/>
            <person name="Rad R."/>
            <person name="Beausoleil S.A."/>
            <person name="Villen J."/>
            <person name="Haas W."/>
            <person name="Sowa M.E."/>
            <person name="Gygi S.P."/>
        </authorList>
    </citation>
    <scope>IDENTIFICATION BY MASS SPECTROMETRY [LARGE SCALE ANALYSIS]</scope>
    <source>
        <tissue>Brain</tissue>
        <tissue>Brown adipose tissue</tissue>
        <tissue>Heart</tissue>
        <tissue>Kidney</tissue>
        <tissue>Liver</tissue>
        <tissue>Lung</tissue>
        <tissue>Pancreas</tissue>
        <tissue>Spleen</tissue>
        <tissue>Testis</tissue>
    </source>
</reference>
<keyword id="KW-0002">3D-structure</keyword>
<keyword id="KW-0256">Endoplasmic reticulum</keyword>
<keyword id="KW-0333">Golgi apparatus</keyword>
<keyword id="KW-0472">Membrane</keyword>
<keyword id="KW-0653">Protein transport</keyword>
<keyword id="KW-1185">Reference proteome</keyword>
<keyword id="KW-0732">Signal</keyword>
<keyword id="KW-0812">Transmembrane</keyword>
<keyword id="KW-1133">Transmembrane helix</keyword>
<keyword id="KW-0813">Transport</keyword>
<feature type="signal peptide" evidence="2">
    <location>
        <begin position="1"/>
        <end position="27"/>
    </location>
</feature>
<feature type="chain" id="PRO_0000010390" description="Transmembrane emp24 domain-containing protein 5">
    <location>
        <begin position="28"/>
        <end position="229"/>
    </location>
</feature>
<feature type="topological domain" description="Lumenal" evidence="2">
    <location>
        <begin position="28"/>
        <end position="196"/>
    </location>
</feature>
<feature type="transmembrane region" description="Helical" evidence="2">
    <location>
        <begin position="197"/>
        <end position="217"/>
    </location>
</feature>
<feature type="topological domain" description="Cytoplasmic" evidence="2">
    <location>
        <begin position="218"/>
        <end position="229"/>
    </location>
</feature>
<feature type="domain" description="GOLD" evidence="3">
    <location>
        <begin position="45"/>
        <end position="126"/>
    </location>
</feature>
<feature type="strand" evidence="5">
    <location>
        <begin position="33"/>
        <end position="40"/>
    </location>
</feature>
<feature type="strand" evidence="5">
    <location>
        <begin position="44"/>
        <end position="52"/>
    </location>
</feature>
<feature type="strand" evidence="5">
    <location>
        <begin position="59"/>
        <end position="67"/>
    </location>
</feature>
<feature type="strand" evidence="5">
    <location>
        <begin position="72"/>
        <end position="77"/>
    </location>
</feature>
<feature type="strand" evidence="5">
    <location>
        <begin position="83"/>
        <end position="96"/>
    </location>
</feature>
<feature type="strand" evidence="5">
    <location>
        <begin position="101"/>
        <end position="110"/>
    </location>
</feature>
<feature type="strand" evidence="5">
    <location>
        <begin position="118"/>
        <end position="126"/>
    </location>
</feature>
<feature type="helix" evidence="5">
    <location>
        <begin position="136"/>
        <end position="140"/>
    </location>
</feature>
<name>TMED5_MOUSE</name>
<sequence length="229" mass="26172">MGGRMWLPFPVLLLSALPAALLRGAAGFTPSLDSDFTFTLPAGRKECFYQPMPLKASLEIEYQVLDGGELDIDFHLTSPEGRTLVFEQRKSDGVHTIETEDGDYMFCFDNTFSTISEKVIFFELILDNMGEEVQGQEDWKKYITNTDVLEMKLEDILESINSIKSRLSKSGHIQTLLRAFEARDRNIQESNFDRVNFWSVVNLMVMVVVSAIQVYTLKSLFEDKRKSRT</sequence>